<organism>
    <name type="scientific">Photorhabdus asymbiotica subsp. asymbiotica (strain ATCC 43949 / 3105-77)</name>
    <name type="common">Xenorhabdus luminescens (strain 2)</name>
    <dbReference type="NCBI Taxonomy" id="553480"/>
    <lineage>
        <taxon>Bacteria</taxon>
        <taxon>Pseudomonadati</taxon>
        <taxon>Pseudomonadota</taxon>
        <taxon>Gammaproteobacteria</taxon>
        <taxon>Enterobacterales</taxon>
        <taxon>Morganellaceae</taxon>
        <taxon>Photorhabdus</taxon>
    </lineage>
</organism>
<feature type="chain" id="PRO_0000401949" description="tRNA (cytidine(34)-2'-O)-methyltransferase">
    <location>
        <begin position="1"/>
        <end position="162"/>
    </location>
</feature>
<feature type="binding site" evidence="1">
    <location>
        <position position="83"/>
    </location>
    <ligand>
        <name>S-adenosyl-L-methionine</name>
        <dbReference type="ChEBI" id="CHEBI:59789"/>
    </ligand>
</feature>
<feature type="binding site" evidence="1">
    <location>
        <position position="105"/>
    </location>
    <ligand>
        <name>S-adenosyl-L-methionine</name>
        <dbReference type="ChEBI" id="CHEBI:59789"/>
    </ligand>
</feature>
<feature type="binding site" evidence="1">
    <location>
        <position position="127"/>
    </location>
    <ligand>
        <name>S-adenosyl-L-methionine</name>
        <dbReference type="ChEBI" id="CHEBI:59789"/>
    </ligand>
</feature>
<feature type="binding site" evidence="1">
    <location>
        <position position="135"/>
    </location>
    <ligand>
        <name>S-adenosyl-L-methionine</name>
        <dbReference type="ChEBI" id="CHEBI:59789"/>
    </ligand>
</feature>
<keyword id="KW-0963">Cytoplasm</keyword>
<keyword id="KW-0489">Methyltransferase</keyword>
<keyword id="KW-0949">S-adenosyl-L-methionine</keyword>
<keyword id="KW-0808">Transferase</keyword>
<keyword id="KW-0819">tRNA processing</keyword>
<dbReference type="EC" id="2.1.1.207" evidence="1"/>
<dbReference type="EMBL" id="FM162591">
    <property type="protein sequence ID" value="CAQ86431.1"/>
    <property type="status" value="ALT_INIT"/>
    <property type="molecule type" value="Genomic_DNA"/>
</dbReference>
<dbReference type="SMR" id="C7BSD3"/>
<dbReference type="STRING" id="291112.PAU_04344"/>
<dbReference type="KEGG" id="pay:PAU_04344"/>
<dbReference type="eggNOG" id="COG0219">
    <property type="taxonomic scope" value="Bacteria"/>
</dbReference>
<dbReference type="Proteomes" id="UP000002747">
    <property type="component" value="Chromosome"/>
</dbReference>
<dbReference type="GO" id="GO:0005737">
    <property type="term" value="C:cytoplasm"/>
    <property type="evidence" value="ECO:0007669"/>
    <property type="project" value="UniProtKB-SubCell"/>
</dbReference>
<dbReference type="GO" id="GO:0003723">
    <property type="term" value="F:RNA binding"/>
    <property type="evidence" value="ECO:0007669"/>
    <property type="project" value="InterPro"/>
</dbReference>
<dbReference type="GO" id="GO:0141102">
    <property type="term" value="F:tRNA (5-carboxymethylaminomethyluridine(34)-2'-O)-methyltransferase activity"/>
    <property type="evidence" value="ECO:0007669"/>
    <property type="project" value="RHEA"/>
</dbReference>
<dbReference type="GO" id="GO:0141098">
    <property type="term" value="F:tRNA (cytidine(34)-2'-O)-methyltransferase activity"/>
    <property type="evidence" value="ECO:0007669"/>
    <property type="project" value="RHEA"/>
</dbReference>
<dbReference type="GO" id="GO:0002131">
    <property type="term" value="P:wobble position cytosine ribose methylation"/>
    <property type="evidence" value="ECO:0007669"/>
    <property type="project" value="TreeGrafter"/>
</dbReference>
<dbReference type="GO" id="GO:0002132">
    <property type="term" value="P:wobble position uridine ribose methylation"/>
    <property type="evidence" value="ECO:0007669"/>
    <property type="project" value="TreeGrafter"/>
</dbReference>
<dbReference type="CDD" id="cd18094">
    <property type="entry name" value="SpoU-like_TrmL"/>
    <property type="match status" value="1"/>
</dbReference>
<dbReference type="FunFam" id="3.40.1280.10:FF:000002">
    <property type="entry name" value="Peptidylprolyl isomerase"/>
    <property type="match status" value="1"/>
</dbReference>
<dbReference type="Gene3D" id="3.40.1280.10">
    <property type="match status" value="1"/>
</dbReference>
<dbReference type="HAMAP" id="MF_01885">
    <property type="entry name" value="tRNA_methyltr_TrmL"/>
    <property type="match status" value="1"/>
</dbReference>
<dbReference type="InterPro" id="IPR029028">
    <property type="entry name" value="Alpha/beta_knot_MTases"/>
</dbReference>
<dbReference type="InterPro" id="IPR001537">
    <property type="entry name" value="SpoU_MeTrfase"/>
</dbReference>
<dbReference type="InterPro" id="IPR016914">
    <property type="entry name" value="TrmL"/>
</dbReference>
<dbReference type="InterPro" id="IPR029026">
    <property type="entry name" value="tRNA_m1G_MTases_N"/>
</dbReference>
<dbReference type="NCBIfam" id="NF007683">
    <property type="entry name" value="PRK10358.1"/>
    <property type="match status" value="1"/>
</dbReference>
<dbReference type="NCBIfam" id="TIGR00185">
    <property type="entry name" value="tRNA_yibK_trmL"/>
    <property type="match status" value="1"/>
</dbReference>
<dbReference type="PANTHER" id="PTHR42971">
    <property type="entry name" value="TRNA (CYTIDINE(34)-2'-O)-METHYLTRANSFERASE"/>
    <property type="match status" value="1"/>
</dbReference>
<dbReference type="PANTHER" id="PTHR42971:SF1">
    <property type="entry name" value="TRNA (CYTIDINE(34)-2'-O)-METHYLTRANSFERASE"/>
    <property type="match status" value="1"/>
</dbReference>
<dbReference type="Pfam" id="PF00588">
    <property type="entry name" value="SpoU_methylase"/>
    <property type="match status" value="1"/>
</dbReference>
<dbReference type="PIRSF" id="PIRSF029256">
    <property type="entry name" value="SpoU_TrmH_prd"/>
    <property type="match status" value="1"/>
</dbReference>
<dbReference type="SUPFAM" id="SSF75217">
    <property type="entry name" value="alpha/beta knot"/>
    <property type="match status" value="1"/>
</dbReference>
<proteinExistence type="inferred from homology"/>
<gene>
    <name evidence="1" type="primary">trmL</name>
    <name type="ordered locus">PAU_04344</name>
</gene>
<protein>
    <recommendedName>
        <fullName evidence="1">tRNA (cytidine(34)-2'-O)-methyltransferase</fullName>
        <ecNumber evidence="1">2.1.1.207</ecNumber>
    </recommendedName>
    <alternativeName>
        <fullName evidence="1">tRNA (cytidine/uridine-2'-O-)-methyltransferase TrmL</fullName>
    </alternativeName>
</protein>
<accession>C7BSD3</accession>
<sequence>MLNIVLFEPEIPPNTGNIIRLCANTGFQLHLIQPLGFTWDDKRLRRAGLDYHEFANIKQHHDYHSFLENEGVTGESFARLFALTTKGTPAHSAVSYQAGDYLMFGPETRGLPSYVLDNMPPQQKIRIPMLADSRSMNLSNSVAVVVFEAWRQLGYSGALLKE</sequence>
<name>TRML_PHOAA</name>
<evidence type="ECO:0000255" key="1">
    <source>
        <dbReference type="HAMAP-Rule" id="MF_01885"/>
    </source>
</evidence>
<evidence type="ECO:0000305" key="2"/>
<reference key="1">
    <citation type="journal article" date="2009" name="BMC Genomics">
        <title>Comparative genomics of the emerging human pathogen Photorhabdus asymbiotica with the insect pathogen Photorhabdus luminescens.</title>
        <authorList>
            <person name="Wilkinson P."/>
            <person name="Waterfield N.R."/>
            <person name="Crossman L."/>
            <person name="Corton C."/>
            <person name="Sanchez-Contreras M."/>
            <person name="Vlisidou I."/>
            <person name="Barron A."/>
            <person name="Bignell A."/>
            <person name="Clark L."/>
            <person name="Ormond D."/>
            <person name="Mayho M."/>
            <person name="Bason N."/>
            <person name="Smith F."/>
            <person name="Simmonds M."/>
            <person name="Churcher C."/>
            <person name="Harris D."/>
            <person name="Thompson N.R."/>
            <person name="Quail M."/>
            <person name="Parkhill J."/>
            <person name="ffrench-Constant R.H."/>
        </authorList>
    </citation>
    <scope>NUCLEOTIDE SEQUENCE [LARGE SCALE GENOMIC DNA]</scope>
    <source>
        <strain>ATCC 43949 / 3105-77</strain>
    </source>
</reference>
<comment type="function">
    <text evidence="1">Methylates the ribose at the nucleotide 34 wobble position in the two leucyl isoacceptors tRNA(Leu)(CmAA) and tRNA(Leu)(cmnm5UmAA). Catalyzes the methyl transfer from S-adenosyl-L-methionine to the 2'-OH of the wobble nucleotide.</text>
</comment>
<comment type="catalytic activity">
    <reaction evidence="1">
        <text>cytidine(34) in tRNA + S-adenosyl-L-methionine = 2'-O-methylcytidine(34) in tRNA + S-adenosyl-L-homocysteine + H(+)</text>
        <dbReference type="Rhea" id="RHEA:43084"/>
        <dbReference type="Rhea" id="RHEA-COMP:10331"/>
        <dbReference type="Rhea" id="RHEA-COMP:10332"/>
        <dbReference type="ChEBI" id="CHEBI:15378"/>
        <dbReference type="ChEBI" id="CHEBI:57856"/>
        <dbReference type="ChEBI" id="CHEBI:59789"/>
        <dbReference type="ChEBI" id="CHEBI:74495"/>
        <dbReference type="ChEBI" id="CHEBI:82748"/>
        <dbReference type="EC" id="2.1.1.207"/>
    </reaction>
</comment>
<comment type="catalytic activity">
    <reaction evidence="1">
        <text>5-carboxymethylaminomethyluridine(34) in tRNA(Leu) + S-adenosyl-L-methionine = 5-carboxymethylaminomethyl-2'-O-methyluridine(34) in tRNA(Leu) + S-adenosyl-L-homocysteine + H(+)</text>
        <dbReference type="Rhea" id="RHEA:43088"/>
        <dbReference type="Rhea" id="RHEA-COMP:10333"/>
        <dbReference type="Rhea" id="RHEA-COMP:10334"/>
        <dbReference type="ChEBI" id="CHEBI:15378"/>
        <dbReference type="ChEBI" id="CHEBI:57856"/>
        <dbReference type="ChEBI" id="CHEBI:59789"/>
        <dbReference type="ChEBI" id="CHEBI:74508"/>
        <dbReference type="ChEBI" id="CHEBI:74511"/>
        <dbReference type="EC" id="2.1.1.207"/>
    </reaction>
</comment>
<comment type="subunit">
    <text evidence="1">Homodimer.</text>
</comment>
<comment type="subcellular location">
    <subcellularLocation>
        <location evidence="1">Cytoplasm</location>
    </subcellularLocation>
</comment>
<comment type="similarity">
    <text evidence="1">Belongs to the class IV-like SAM-binding methyltransferase superfamily. RNA methyltransferase TrmH family. TrmL subfamily.</text>
</comment>
<comment type="sequence caution" evidence="2">
    <conflict type="erroneous initiation">
        <sequence resource="EMBL-CDS" id="CAQ86431"/>
    </conflict>
    <text>Extended N-terminus.</text>
</comment>